<sequence>MQNTIRIVGIDPGLRRTGWGIIETSGNSLRFVASGTVTSDGDMDLASRLCQLHDGLAEIVHSYKPDEAAVEQTFVNKDAVATLKLGQARGIAMLVPARAGLPVSEYAPNAVKKAVIGVGHGEKQQIHMMLKILMPKVEFKGNDAADALAIAICHAHNRGSNRMRQALAG</sequence>
<name>RUVC_RHIJ3</name>
<organism>
    <name type="scientific">Rhizobium johnstonii (strain DSM 114642 / LMG 32736 / 3841)</name>
    <name type="common">Rhizobium leguminosarum bv. viciae</name>
    <dbReference type="NCBI Taxonomy" id="216596"/>
    <lineage>
        <taxon>Bacteria</taxon>
        <taxon>Pseudomonadati</taxon>
        <taxon>Pseudomonadota</taxon>
        <taxon>Alphaproteobacteria</taxon>
        <taxon>Hyphomicrobiales</taxon>
        <taxon>Rhizobiaceae</taxon>
        <taxon>Rhizobium/Agrobacterium group</taxon>
        <taxon>Rhizobium</taxon>
        <taxon>Rhizobium johnstonii</taxon>
    </lineage>
</organism>
<feature type="chain" id="PRO_1000002810" description="Crossover junction endodeoxyribonuclease RuvC">
    <location>
        <begin position="1"/>
        <end position="169"/>
    </location>
</feature>
<feature type="active site" evidence="1">
    <location>
        <position position="11"/>
    </location>
</feature>
<feature type="active site" evidence="1">
    <location>
        <position position="71"/>
    </location>
</feature>
<feature type="active site" evidence="1">
    <location>
        <position position="143"/>
    </location>
</feature>
<feature type="binding site" evidence="1">
    <location>
        <position position="11"/>
    </location>
    <ligand>
        <name>Mg(2+)</name>
        <dbReference type="ChEBI" id="CHEBI:18420"/>
        <label>1</label>
    </ligand>
</feature>
<feature type="binding site" evidence="1">
    <location>
        <position position="71"/>
    </location>
    <ligand>
        <name>Mg(2+)</name>
        <dbReference type="ChEBI" id="CHEBI:18420"/>
        <label>2</label>
    </ligand>
</feature>
<feature type="binding site" evidence="1">
    <location>
        <position position="143"/>
    </location>
    <ligand>
        <name>Mg(2+)</name>
        <dbReference type="ChEBI" id="CHEBI:18420"/>
        <label>1</label>
    </ligand>
</feature>
<gene>
    <name evidence="1" type="primary">ruvC</name>
    <name type="ordered locus">RL3986</name>
</gene>
<proteinExistence type="inferred from homology"/>
<protein>
    <recommendedName>
        <fullName evidence="1">Crossover junction endodeoxyribonuclease RuvC</fullName>
        <ecNumber evidence="1">3.1.21.10</ecNumber>
    </recommendedName>
    <alternativeName>
        <fullName evidence="1">Holliday junction nuclease RuvC</fullName>
    </alternativeName>
    <alternativeName>
        <fullName evidence="1">Holliday junction resolvase RuvC</fullName>
    </alternativeName>
</protein>
<accession>Q1MC56</accession>
<keyword id="KW-0963">Cytoplasm</keyword>
<keyword id="KW-0227">DNA damage</keyword>
<keyword id="KW-0233">DNA recombination</keyword>
<keyword id="KW-0234">DNA repair</keyword>
<keyword id="KW-0238">DNA-binding</keyword>
<keyword id="KW-0255">Endonuclease</keyword>
<keyword id="KW-0378">Hydrolase</keyword>
<keyword id="KW-0460">Magnesium</keyword>
<keyword id="KW-0479">Metal-binding</keyword>
<keyword id="KW-0540">Nuclease</keyword>
<evidence type="ECO:0000255" key="1">
    <source>
        <dbReference type="HAMAP-Rule" id="MF_00034"/>
    </source>
</evidence>
<comment type="function">
    <text evidence="1">The RuvA-RuvB-RuvC complex processes Holliday junction (HJ) DNA during genetic recombination and DNA repair. Endonuclease that resolves HJ intermediates. Cleaves cruciform DNA by making single-stranded nicks across the HJ at symmetrical positions within the homologous arms, yielding a 5'-phosphate and a 3'-hydroxyl group; requires a central core of homology in the junction. The consensus cleavage sequence is 5'-(A/T)TT(C/G)-3'. Cleavage occurs on the 3'-side of the TT dinucleotide at the point of strand exchange. HJ branch migration catalyzed by RuvA-RuvB allows RuvC to scan DNA until it finds its consensus sequence, where it cleaves and resolves the cruciform DNA.</text>
</comment>
<comment type="catalytic activity">
    <reaction evidence="1">
        <text>Endonucleolytic cleavage at a junction such as a reciprocal single-stranded crossover between two homologous DNA duplexes (Holliday junction).</text>
        <dbReference type="EC" id="3.1.21.10"/>
    </reaction>
</comment>
<comment type="cofactor">
    <cofactor evidence="1">
        <name>Mg(2+)</name>
        <dbReference type="ChEBI" id="CHEBI:18420"/>
    </cofactor>
    <text evidence="1">Binds 2 Mg(2+) ion per subunit.</text>
</comment>
<comment type="subunit">
    <text evidence="1">Homodimer which binds Holliday junction (HJ) DNA. The HJ becomes 2-fold symmetrical on binding to RuvC with unstacked arms; it has a different conformation from HJ DNA in complex with RuvA. In the full resolvosome a probable DNA-RuvA(4)-RuvB(12)-RuvC(2) complex forms which resolves the HJ.</text>
</comment>
<comment type="subcellular location">
    <subcellularLocation>
        <location evidence="1">Cytoplasm</location>
    </subcellularLocation>
</comment>
<comment type="similarity">
    <text evidence="1">Belongs to the RuvC family.</text>
</comment>
<reference key="1">
    <citation type="journal article" date="2006" name="Genome Biol.">
        <title>The genome of Rhizobium leguminosarum has recognizable core and accessory components.</title>
        <authorList>
            <person name="Young J.P.W."/>
            <person name="Crossman L.C."/>
            <person name="Johnston A.W.B."/>
            <person name="Thomson N.R."/>
            <person name="Ghazoui Z.F."/>
            <person name="Hull K.H."/>
            <person name="Wexler M."/>
            <person name="Curson A.R.J."/>
            <person name="Todd J.D."/>
            <person name="Poole P.S."/>
            <person name="Mauchline T.H."/>
            <person name="East A.K."/>
            <person name="Quail M.A."/>
            <person name="Churcher C."/>
            <person name="Arrowsmith C."/>
            <person name="Cherevach I."/>
            <person name="Chillingworth T."/>
            <person name="Clarke K."/>
            <person name="Cronin A."/>
            <person name="Davis P."/>
            <person name="Fraser A."/>
            <person name="Hance Z."/>
            <person name="Hauser H."/>
            <person name="Jagels K."/>
            <person name="Moule S."/>
            <person name="Mungall K."/>
            <person name="Norbertczak H."/>
            <person name="Rabbinowitsch E."/>
            <person name="Sanders M."/>
            <person name="Simmonds M."/>
            <person name="Whitehead S."/>
            <person name="Parkhill J."/>
        </authorList>
    </citation>
    <scope>NUCLEOTIDE SEQUENCE [LARGE SCALE GENOMIC DNA]</scope>
    <source>
        <strain>DSM 114642 / LMG 32736 / 3841</strain>
    </source>
</reference>
<dbReference type="EC" id="3.1.21.10" evidence="1"/>
<dbReference type="EMBL" id="AM236080">
    <property type="protein sequence ID" value="CAK09476.1"/>
    <property type="molecule type" value="Genomic_DNA"/>
</dbReference>
<dbReference type="RefSeq" id="WP_003542749.1">
    <property type="nucleotide sequence ID" value="NC_008380.1"/>
</dbReference>
<dbReference type="SMR" id="Q1MC56"/>
<dbReference type="EnsemblBacteria" id="CAK09476">
    <property type="protein sequence ID" value="CAK09476"/>
    <property type="gene ID" value="RL3986"/>
</dbReference>
<dbReference type="KEGG" id="rle:RL3986"/>
<dbReference type="eggNOG" id="COG0817">
    <property type="taxonomic scope" value="Bacteria"/>
</dbReference>
<dbReference type="HOGENOM" id="CLU_091257_1_0_5"/>
<dbReference type="Proteomes" id="UP000006575">
    <property type="component" value="Chromosome"/>
</dbReference>
<dbReference type="GO" id="GO:0005737">
    <property type="term" value="C:cytoplasm"/>
    <property type="evidence" value="ECO:0007669"/>
    <property type="project" value="UniProtKB-SubCell"/>
</dbReference>
<dbReference type="GO" id="GO:0048476">
    <property type="term" value="C:Holliday junction resolvase complex"/>
    <property type="evidence" value="ECO:0007669"/>
    <property type="project" value="UniProtKB-UniRule"/>
</dbReference>
<dbReference type="GO" id="GO:0008821">
    <property type="term" value="F:crossover junction DNA endonuclease activity"/>
    <property type="evidence" value="ECO:0007669"/>
    <property type="project" value="UniProtKB-UniRule"/>
</dbReference>
<dbReference type="GO" id="GO:0003677">
    <property type="term" value="F:DNA binding"/>
    <property type="evidence" value="ECO:0007669"/>
    <property type="project" value="UniProtKB-KW"/>
</dbReference>
<dbReference type="GO" id="GO:0000287">
    <property type="term" value="F:magnesium ion binding"/>
    <property type="evidence" value="ECO:0007669"/>
    <property type="project" value="UniProtKB-UniRule"/>
</dbReference>
<dbReference type="GO" id="GO:0006310">
    <property type="term" value="P:DNA recombination"/>
    <property type="evidence" value="ECO:0007669"/>
    <property type="project" value="UniProtKB-UniRule"/>
</dbReference>
<dbReference type="GO" id="GO:0006281">
    <property type="term" value="P:DNA repair"/>
    <property type="evidence" value="ECO:0007669"/>
    <property type="project" value="UniProtKB-UniRule"/>
</dbReference>
<dbReference type="CDD" id="cd16962">
    <property type="entry name" value="RuvC"/>
    <property type="match status" value="1"/>
</dbReference>
<dbReference type="FunFam" id="3.30.420.10:FF:000002">
    <property type="entry name" value="Crossover junction endodeoxyribonuclease RuvC"/>
    <property type="match status" value="1"/>
</dbReference>
<dbReference type="Gene3D" id="3.30.420.10">
    <property type="entry name" value="Ribonuclease H-like superfamily/Ribonuclease H"/>
    <property type="match status" value="1"/>
</dbReference>
<dbReference type="HAMAP" id="MF_00034">
    <property type="entry name" value="RuvC"/>
    <property type="match status" value="1"/>
</dbReference>
<dbReference type="InterPro" id="IPR012337">
    <property type="entry name" value="RNaseH-like_sf"/>
</dbReference>
<dbReference type="InterPro" id="IPR036397">
    <property type="entry name" value="RNaseH_sf"/>
</dbReference>
<dbReference type="InterPro" id="IPR020563">
    <property type="entry name" value="X-over_junc_endoDNase_Mg_BS"/>
</dbReference>
<dbReference type="InterPro" id="IPR002176">
    <property type="entry name" value="X-over_junc_endoDNase_RuvC"/>
</dbReference>
<dbReference type="NCBIfam" id="TIGR00228">
    <property type="entry name" value="ruvC"/>
    <property type="match status" value="1"/>
</dbReference>
<dbReference type="PANTHER" id="PTHR30194">
    <property type="entry name" value="CROSSOVER JUNCTION ENDODEOXYRIBONUCLEASE RUVC"/>
    <property type="match status" value="1"/>
</dbReference>
<dbReference type="PANTHER" id="PTHR30194:SF3">
    <property type="entry name" value="CROSSOVER JUNCTION ENDODEOXYRIBONUCLEASE RUVC"/>
    <property type="match status" value="1"/>
</dbReference>
<dbReference type="Pfam" id="PF02075">
    <property type="entry name" value="RuvC"/>
    <property type="match status" value="1"/>
</dbReference>
<dbReference type="PRINTS" id="PR00696">
    <property type="entry name" value="RSOLVASERUVC"/>
</dbReference>
<dbReference type="SUPFAM" id="SSF53098">
    <property type="entry name" value="Ribonuclease H-like"/>
    <property type="match status" value="1"/>
</dbReference>
<dbReference type="PROSITE" id="PS01321">
    <property type="entry name" value="RUVC"/>
    <property type="match status" value="1"/>
</dbReference>